<reference key="1">
    <citation type="journal article" date="2000" name="Nature">
        <title>The genome sequence of the plant pathogen Xylella fastidiosa.</title>
        <authorList>
            <person name="Simpson A.J.G."/>
            <person name="Reinach F.C."/>
            <person name="Arruda P."/>
            <person name="Abreu F.A."/>
            <person name="Acencio M."/>
            <person name="Alvarenga R."/>
            <person name="Alves L.M.C."/>
            <person name="Araya J.E."/>
            <person name="Baia G.S."/>
            <person name="Baptista C.S."/>
            <person name="Barros M.H."/>
            <person name="Bonaccorsi E.D."/>
            <person name="Bordin S."/>
            <person name="Bove J.M."/>
            <person name="Briones M.R.S."/>
            <person name="Bueno M.R.P."/>
            <person name="Camargo A.A."/>
            <person name="Camargo L.E.A."/>
            <person name="Carraro D.M."/>
            <person name="Carrer H."/>
            <person name="Colauto N.B."/>
            <person name="Colombo C."/>
            <person name="Costa F.F."/>
            <person name="Costa M.C.R."/>
            <person name="Costa-Neto C.M."/>
            <person name="Coutinho L.L."/>
            <person name="Cristofani M."/>
            <person name="Dias-Neto E."/>
            <person name="Docena C."/>
            <person name="El-Dorry H."/>
            <person name="Facincani A.P."/>
            <person name="Ferreira A.J.S."/>
            <person name="Ferreira V.C.A."/>
            <person name="Ferro J.A."/>
            <person name="Fraga J.S."/>
            <person name="Franca S.C."/>
            <person name="Franco M.C."/>
            <person name="Frohme M."/>
            <person name="Furlan L.R."/>
            <person name="Garnier M."/>
            <person name="Goldman G.H."/>
            <person name="Goldman M.H.S."/>
            <person name="Gomes S.L."/>
            <person name="Gruber A."/>
            <person name="Ho P.L."/>
            <person name="Hoheisel J.D."/>
            <person name="Junqueira M.L."/>
            <person name="Kemper E.L."/>
            <person name="Kitajima J.P."/>
            <person name="Krieger J.E."/>
            <person name="Kuramae E.E."/>
            <person name="Laigret F."/>
            <person name="Lambais M.R."/>
            <person name="Leite L.C.C."/>
            <person name="Lemos E.G.M."/>
            <person name="Lemos M.V.F."/>
            <person name="Lopes S.A."/>
            <person name="Lopes C.R."/>
            <person name="Machado J.A."/>
            <person name="Machado M.A."/>
            <person name="Madeira A.M.B.N."/>
            <person name="Madeira H.M.F."/>
            <person name="Marino C.L."/>
            <person name="Marques M.V."/>
            <person name="Martins E.A.L."/>
            <person name="Martins E.M.F."/>
            <person name="Matsukuma A.Y."/>
            <person name="Menck C.F.M."/>
            <person name="Miracca E.C."/>
            <person name="Miyaki C.Y."/>
            <person name="Monteiro-Vitorello C.B."/>
            <person name="Moon D.H."/>
            <person name="Nagai M.A."/>
            <person name="Nascimento A.L.T.O."/>
            <person name="Netto L.E.S."/>
            <person name="Nhani A. Jr."/>
            <person name="Nobrega F.G."/>
            <person name="Nunes L.R."/>
            <person name="Oliveira M.A."/>
            <person name="de Oliveira M.C."/>
            <person name="de Oliveira R.C."/>
            <person name="Palmieri D.A."/>
            <person name="Paris A."/>
            <person name="Peixoto B.R."/>
            <person name="Pereira G.A.G."/>
            <person name="Pereira H.A. Jr."/>
            <person name="Pesquero J.B."/>
            <person name="Quaggio R.B."/>
            <person name="Roberto P.G."/>
            <person name="Rodrigues V."/>
            <person name="de Rosa A.J.M."/>
            <person name="de Rosa V.E. Jr."/>
            <person name="de Sa R.G."/>
            <person name="Santelli R.V."/>
            <person name="Sawasaki H.E."/>
            <person name="da Silva A.C.R."/>
            <person name="da Silva A.M."/>
            <person name="da Silva F.R."/>
            <person name="Silva W.A. Jr."/>
            <person name="da Silveira J.F."/>
            <person name="Silvestri M.L.Z."/>
            <person name="Siqueira W.J."/>
            <person name="de Souza A.A."/>
            <person name="de Souza A.P."/>
            <person name="Terenzi M.F."/>
            <person name="Truffi D."/>
            <person name="Tsai S.M."/>
            <person name="Tsuhako M.H."/>
            <person name="Vallada H."/>
            <person name="Van Sluys M.A."/>
            <person name="Verjovski-Almeida S."/>
            <person name="Vettore A.L."/>
            <person name="Zago M.A."/>
            <person name="Zatz M."/>
            <person name="Meidanis J."/>
            <person name="Setubal J.C."/>
        </authorList>
    </citation>
    <scope>NUCLEOTIDE SEQUENCE [LARGE SCALE GENOMIC DNA]</scope>
    <source>
        <strain>9a5c</strain>
    </source>
</reference>
<protein>
    <recommendedName>
        <fullName evidence="1">Glutamine--fructose-6-phosphate aminotransferase [isomerizing]</fullName>
        <ecNumber evidence="1">2.6.1.16</ecNumber>
    </recommendedName>
    <alternativeName>
        <fullName evidence="1">D-fructose-6-phosphate amidotransferase</fullName>
    </alternativeName>
    <alternativeName>
        <fullName evidence="1">GFAT</fullName>
    </alternativeName>
    <alternativeName>
        <fullName evidence="1">Glucosamine-6-phosphate synthase</fullName>
    </alternativeName>
    <alternativeName>
        <fullName evidence="1">Hexosephosphate aminotransferase</fullName>
    </alternativeName>
    <alternativeName>
        <fullName evidence="1">L-glutamine--D-fructose-6-phosphate amidotransferase</fullName>
    </alternativeName>
</protein>
<keyword id="KW-0032">Aminotransferase</keyword>
<keyword id="KW-0963">Cytoplasm</keyword>
<keyword id="KW-0315">Glutamine amidotransferase</keyword>
<keyword id="KW-0677">Repeat</keyword>
<keyword id="KW-0808">Transferase</keyword>
<dbReference type="EC" id="2.6.1.16" evidence="1"/>
<dbReference type="EMBL" id="AE003849">
    <property type="protein sequence ID" value="AAF82954.1"/>
    <property type="molecule type" value="Genomic_DNA"/>
</dbReference>
<dbReference type="PIR" id="A82844">
    <property type="entry name" value="A82844"/>
</dbReference>
<dbReference type="RefSeq" id="WP_010892686.1">
    <property type="nucleotide sequence ID" value="NC_002488.3"/>
</dbReference>
<dbReference type="SMR" id="Q9PH05"/>
<dbReference type="STRING" id="160492.XF_0141"/>
<dbReference type="KEGG" id="xfa:XF_0141"/>
<dbReference type="eggNOG" id="COG0449">
    <property type="taxonomic scope" value="Bacteria"/>
</dbReference>
<dbReference type="HOGENOM" id="CLU_012520_5_2_6"/>
<dbReference type="Proteomes" id="UP000000812">
    <property type="component" value="Chromosome"/>
</dbReference>
<dbReference type="GO" id="GO:0005829">
    <property type="term" value="C:cytosol"/>
    <property type="evidence" value="ECO:0007669"/>
    <property type="project" value="TreeGrafter"/>
</dbReference>
<dbReference type="GO" id="GO:0097367">
    <property type="term" value="F:carbohydrate derivative binding"/>
    <property type="evidence" value="ECO:0007669"/>
    <property type="project" value="InterPro"/>
</dbReference>
<dbReference type="GO" id="GO:0004360">
    <property type="term" value="F:glutamine-fructose-6-phosphate transaminase (isomerizing) activity"/>
    <property type="evidence" value="ECO:0007669"/>
    <property type="project" value="UniProtKB-UniRule"/>
</dbReference>
<dbReference type="GO" id="GO:0005975">
    <property type="term" value="P:carbohydrate metabolic process"/>
    <property type="evidence" value="ECO:0007669"/>
    <property type="project" value="UniProtKB-UniRule"/>
</dbReference>
<dbReference type="GO" id="GO:0006002">
    <property type="term" value="P:fructose 6-phosphate metabolic process"/>
    <property type="evidence" value="ECO:0007669"/>
    <property type="project" value="TreeGrafter"/>
</dbReference>
<dbReference type="GO" id="GO:0006487">
    <property type="term" value="P:protein N-linked glycosylation"/>
    <property type="evidence" value="ECO:0007669"/>
    <property type="project" value="TreeGrafter"/>
</dbReference>
<dbReference type="GO" id="GO:0006047">
    <property type="term" value="P:UDP-N-acetylglucosamine metabolic process"/>
    <property type="evidence" value="ECO:0007669"/>
    <property type="project" value="TreeGrafter"/>
</dbReference>
<dbReference type="CDD" id="cd00714">
    <property type="entry name" value="GFAT"/>
    <property type="match status" value="1"/>
</dbReference>
<dbReference type="CDD" id="cd05008">
    <property type="entry name" value="SIS_GlmS_GlmD_1"/>
    <property type="match status" value="1"/>
</dbReference>
<dbReference type="CDD" id="cd05009">
    <property type="entry name" value="SIS_GlmS_GlmD_2"/>
    <property type="match status" value="1"/>
</dbReference>
<dbReference type="FunFam" id="3.40.50.10490:FF:000001">
    <property type="entry name" value="Glutamine--fructose-6-phosphate aminotransferase [isomerizing]"/>
    <property type="match status" value="1"/>
</dbReference>
<dbReference type="FunFam" id="3.40.50.10490:FF:000002">
    <property type="entry name" value="Glutamine--fructose-6-phosphate aminotransferase [isomerizing]"/>
    <property type="match status" value="1"/>
</dbReference>
<dbReference type="FunFam" id="3.60.20.10:FF:000006">
    <property type="entry name" value="Glutamine--fructose-6-phosphate aminotransferase [isomerizing]"/>
    <property type="match status" value="1"/>
</dbReference>
<dbReference type="Gene3D" id="3.40.50.10490">
    <property type="entry name" value="Glucose-6-phosphate isomerase like protein, domain 1"/>
    <property type="match status" value="2"/>
</dbReference>
<dbReference type="Gene3D" id="3.60.20.10">
    <property type="entry name" value="Glutamine Phosphoribosylpyrophosphate, subunit 1, domain 1"/>
    <property type="match status" value="1"/>
</dbReference>
<dbReference type="HAMAP" id="MF_00164">
    <property type="entry name" value="GlmS"/>
    <property type="match status" value="1"/>
</dbReference>
<dbReference type="InterPro" id="IPR017932">
    <property type="entry name" value="GATase_2_dom"/>
</dbReference>
<dbReference type="InterPro" id="IPR005855">
    <property type="entry name" value="GFAT"/>
</dbReference>
<dbReference type="InterPro" id="IPR047084">
    <property type="entry name" value="GFAT_N"/>
</dbReference>
<dbReference type="InterPro" id="IPR035466">
    <property type="entry name" value="GlmS/AgaS_SIS"/>
</dbReference>
<dbReference type="InterPro" id="IPR035490">
    <property type="entry name" value="GlmS/FrlB_SIS"/>
</dbReference>
<dbReference type="InterPro" id="IPR029055">
    <property type="entry name" value="Ntn_hydrolases_N"/>
</dbReference>
<dbReference type="InterPro" id="IPR001347">
    <property type="entry name" value="SIS_dom"/>
</dbReference>
<dbReference type="InterPro" id="IPR046348">
    <property type="entry name" value="SIS_dom_sf"/>
</dbReference>
<dbReference type="NCBIfam" id="TIGR01135">
    <property type="entry name" value="glmS"/>
    <property type="match status" value="1"/>
</dbReference>
<dbReference type="NCBIfam" id="NF001484">
    <property type="entry name" value="PRK00331.1"/>
    <property type="match status" value="1"/>
</dbReference>
<dbReference type="PANTHER" id="PTHR10937">
    <property type="entry name" value="GLUCOSAMINE--FRUCTOSE-6-PHOSPHATE AMINOTRANSFERASE, ISOMERIZING"/>
    <property type="match status" value="1"/>
</dbReference>
<dbReference type="PANTHER" id="PTHR10937:SF0">
    <property type="entry name" value="GLUTAMINE--FRUCTOSE-6-PHOSPHATE TRANSAMINASE (ISOMERIZING)"/>
    <property type="match status" value="1"/>
</dbReference>
<dbReference type="Pfam" id="PF13522">
    <property type="entry name" value="GATase_6"/>
    <property type="match status" value="1"/>
</dbReference>
<dbReference type="Pfam" id="PF01380">
    <property type="entry name" value="SIS"/>
    <property type="match status" value="2"/>
</dbReference>
<dbReference type="SUPFAM" id="SSF56235">
    <property type="entry name" value="N-terminal nucleophile aminohydrolases (Ntn hydrolases)"/>
    <property type="match status" value="1"/>
</dbReference>
<dbReference type="SUPFAM" id="SSF53697">
    <property type="entry name" value="SIS domain"/>
    <property type="match status" value="1"/>
</dbReference>
<dbReference type="PROSITE" id="PS51278">
    <property type="entry name" value="GATASE_TYPE_2"/>
    <property type="match status" value="1"/>
</dbReference>
<dbReference type="PROSITE" id="PS51464">
    <property type="entry name" value="SIS"/>
    <property type="match status" value="2"/>
</dbReference>
<sequence>MCGIVGAIAGRDVVPVLIEGLKRLEYRGYDSSGIAVLESGSIRRVRRTGRVAEMAVAATQEGFTASLGIGHTRWATHGGVTEANAHPHVSHGVVLVHNGIIENHEVQRERLSALGYVFQSQTDTEVIAHLIHYHMQQGDDLLGALQCAVKALTGIYALAVMSEAEPERFVCARMGCPLLIGIGDGEHLVASDISAVIQATRQVIFLEDGDTAEIRRDGISIFNAEQCPVERPLHLSNVSLSSLELGEFRHFMQKEIHEQPRVLADTMEAAIDAAGFPPMLFGAQAESVFRGITGIQILACGTSYYAGLTARYWIEAIAGLPCHVEIASEYRYRKAYVNPQHLVVTISQSGETLDTLEALKYAKALGHRHTLSICNAPDSAIPRISELICYTRAGPEIGVASTKAFTTQLVVLFQLAVALGVLRGAVDAEHEAAYLEQLRQLPCGVQQALNLEPQIAAWAECFASRHHALFLGRGLHYPIALEGALKLKEISYIHAEAYPAGELKHGPLALVDADMPVVVIAPNDSLLEKVKSNMQEVRARGGELFVFADQDSHFSESEGLHVIRTLRHTGVLSPLVHTIPVQLLAYHTALVRGTDVDKPRNLAKSVTVE</sequence>
<proteinExistence type="inferred from homology"/>
<comment type="function">
    <text evidence="1">Catalyzes the first step in hexosamine metabolism, converting fructose-6P into glucosamine-6P using glutamine as a nitrogen source.</text>
</comment>
<comment type="catalytic activity">
    <reaction evidence="1">
        <text>D-fructose 6-phosphate + L-glutamine = D-glucosamine 6-phosphate + L-glutamate</text>
        <dbReference type="Rhea" id="RHEA:13237"/>
        <dbReference type="ChEBI" id="CHEBI:29985"/>
        <dbReference type="ChEBI" id="CHEBI:58359"/>
        <dbReference type="ChEBI" id="CHEBI:58725"/>
        <dbReference type="ChEBI" id="CHEBI:61527"/>
        <dbReference type="EC" id="2.6.1.16"/>
    </reaction>
</comment>
<comment type="subunit">
    <text evidence="1">Homodimer.</text>
</comment>
<comment type="subcellular location">
    <subcellularLocation>
        <location evidence="1">Cytoplasm</location>
    </subcellularLocation>
</comment>
<accession>Q9PH05</accession>
<evidence type="ECO:0000255" key="1">
    <source>
        <dbReference type="HAMAP-Rule" id="MF_00164"/>
    </source>
</evidence>
<gene>
    <name evidence="1" type="primary">glmS</name>
    <name type="ordered locus">XF_0141</name>
</gene>
<name>GLMS_XYLFA</name>
<organism>
    <name type="scientific">Xylella fastidiosa (strain 9a5c)</name>
    <dbReference type="NCBI Taxonomy" id="160492"/>
    <lineage>
        <taxon>Bacteria</taxon>
        <taxon>Pseudomonadati</taxon>
        <taxon>Pseudomonadota</taxon>
        <taxon>Gammaproteobacteria</taxon>
        <taxon>Lysobacterales</taxon>
        <taxon>Lysobacteraceae</taxon>
        <taxon>Xylella</taxon>
    </lineage>
</organism>
<feature type="initiator methionine" description="Removed" evidence="1">
    <location>
        <position position="1"/>
    </location>
</feature>
<feature type="chain" id="PRO_0000135416" description="Glutamine--fructose-6-phosphate aminotransferase [isomerizing]">
    <location>
        <begin position="2"/>
        <end position="609"/>
    </location>
</feature>
<feature type="domain" description="Glutamine amidotransferase type-2" evidence="1">
    <location>
        <begin position="2"/>
        <end position="217"/>
    </location>
</feature>
<feature type="domain" description="SIS 1" evidence="1">
    <location>
        <begin position="285"/>
        <end position="425"/>
    </location>
</feature>
<feature type="domain" description="SIS 2" evidence="1">
    <location>
        <begin position="458"/>
        <end position="599"/>
    </location>
</feature>
<feature type="active site" description="Nucleophile; for GATase activity" evidence="1">
    <location>
        <position position="2"/>
    </location>
</feature>
<feature type="active site" description="For Fru-6P isomerization activity" evidence="1">
    <location>
        <position position="604"/>
    </location>
</feature>